<keyword id="KW-0274">FAD</keyword>
<keyword id="KW-0285">Flavoprotein</keyword>
<keyword id="KW-0472">Membrane</keyword>
<keyword id="KW-0496">Mitochondrion</keyword>
<keyword id="KW-1000">Mitochondrion outer membrane</keyword>
<keyword id="KW-0520">NAD</keyword>
<keyword id="KW-0560">Oxidoreductase</keyword>
<keyword id="KW-1185">Reference proteome</keyword>
<keyword id="KW-0808">Transferase</keyword>
<keyword id="KW-0812">Transmembrane</keyword>
<keyword id="KW-1133">Transmembrane helix</keyword>
<gene>
    <name type="primary">CBR1</name>
    <name type="ORF">PGUG_05376</name>
</gene>
<sequence length="284" mass="31520">MSQNEPNPLVIFSTLAAIILAAVAVYVVKLNKKNGPVLKPDVFQKFPLIEKTRLSHNTCIYRFGLPKSTDRLGLPIGQHISIGATINGKEVVRSYTPISRDDELGYFDLLIKTYEQGNISRHVDSKSVGDHIEVRGPKGFFTYTPNMVEHLGMIAGGTGIAPMYQVLTAILTNPDDKTKISLVYANVTEEDILLRAELDLFAKEHPDRFKVHYVLNNAPENWNGSVGFVTPEIMEKHLPNKDQDGYLLLCGPPPMISAMKKNAVTLGYPKARPVSKLGDKVFVF</sequence>
<feature type="chain" id="PRO_0000330162" description="NADH-cytochrome b5 reductase 1">
    <location>
        <begin position="1"/>
        <end position="284"/>
    </location>
</feature>
<feature type="transmembrane region" description="Helical" evidence="3">
    <location>
        <begin position="8"/>
        <end position="28"/>
    </location>
</feature>
<feature type="domain" description="FAD-binding FR-type" evidence="4">
    <location>
        <begin position="41"/>
        <end position="144"/>
    </location>
</feature>
<feature type="binding site" evidence="1">
    <location>
        <begin position="124"/>
        <end position="139"/>
    </location>
    <ligand>
        <name>FAD</name>
        <dbReference type="ChEBI" id="CHEBI:57692"/>
    </ligand>
</feature>
<feature type="binding site" evidence="1">
    <location>
        <begin position="150"/>
        <end position="182"/>
    </location>
    <ligand>
        <name>FAD</name>
        <dbReference type="ChEBI" id="CHEBI:57692"/>
    </ligand>
</feature>
<name>NCB5R_PICGU</name>
<protein>
    <recommendedName>
        <fullName>NADH-cytochrome b5 reductase 1</fullName>
        <ecNumber evidence="2">1.6.2.2</ecNumber>
    </recommendedName>
    <alternativeName>
        <fullName>Microsomal cytochrome b reductase</fullName>
    </alternativeName>
</protein>
<evidence type="ECO:0000250" key="1"/>
<evidence type="ECO:0000250" key="2">
    <source>
        <dbReference type="UniProtKB" id="P38626"/>
    </source>
</evidence>
<evidence type="ECO:0000255" key="3"/>
<evidence type="ECO:0000255" key="4">
    <source>
        <dbReference type="PROSITE-ProRule" id="PRU00716"/>
    </source>
</evidence>
<evidence type="ECO:0000305" key="5"/>
<accession>A5DQ25</accession>
<comment type="function">
    <text evidence="2">NADH-dependent reductase for DPH3 and cytochrome b5. Required for the first step of diphthamide biosynthesis, a post-translational modification of histidine which occurs in elongation factor 2. DPH1 and DPH2 transfer a 3-amino-3-carboxypropyl (ACP) group from S-adenosyl-L-methionine (SAM) to a histidine residue, the reaction is assisted by a reduction system comprising DPH3 and a NADH-dependent reductase, predominantly CBR1. By reducing DPH3, also involved in the formation of the tRNA wobble base modification mcm5s 2U (5-methoxycarbonylmethyl-2-thiouridine), mediated by the elongator complex. The cytochrome b5/NADH cytochrome b5 reductase electron transfer system supports the catalytic activity of several sterol biosynthetic enzymes.</text>
</comment>
<comment type="catalytic activity">
    <reaction evidence="2">
        <text>2 Fe(III)-[cytochrome b5] + NADH = 2 Fe(II)-[cytochrome b5] + NAD(+) + H(+)</text>
        <dbReference type="Rhea" id="RHEA:46680"/>
        <dbReference type="Rhea" id="RHEA-COMP:10438"/>
        <dbReference type="Rhea" id="RHEA-COMP:10439"/>
        <dbReference type="ChEBI" id="CHEBI:15378"/>
        <dbReference type="ChEBI" id="CHEBI:29033"/>
        <dbReference type="ChEBI" id="CHEBI:29034"/>
        <dbReference type="ChEBI" id="CHEBI:57540"/>
        <dbReference type="ChEBI" id="CHEBI:57945"/>
        <dbReference type="EC" id="1.6.2.2"/>
    </reaction>
</comment>
<comment type="catalytic activity">
    <reaction evidence="2">
        <text>2 Fe(3+)-[Dph3] + NADH = 2 Fe(2+)-[Dph3] + NAD(+) + H(+)</text>
        <dbReference type="Rhea" id="RHEA:71231"/>
        <dbReference type="Rhea" id="RHEA-COMP:18002"/>
        <dbReference type="Rhea" id="RHEA-COMP:18003"/>
        <dbReference type="ChEBI" id="CHEBI:15378"/>
        <dbReference type="ChEBI" id="CHEBI:29033"/>
        <dbReference type="ChEBI" id="CHEBI:29034"/>
        <dbReference type="ChEBI" id="CHEBI:57540"/>
        <dbReference type="ChEBI" id="CHEBI:57945"/>
        <dbReference type="ChEBI" id="CHEBI:83228"/>
    </reaction>
    <physiologicalReaction direction="left-to-right" evidence="2">
        <dbReference type="Rhea" id="RHEA:71232"/>
    </physiologicalReaction>
</comment>
<comment type="cofactor">
    <cofactor evidence="3">
        <name>FAD</name>
        <dbReference type="ChEBI" id="CHEBI:57692"/>
    </cofactor>
</comment>
<comment type="pathway">
    <text evidence="2">Protein modification; peptidyl-diphthamide biosynthesis.</text>
</comment>
<comment type="subunit">
    <text evidence="2">Monomer. Component of the 2-(3-amino-3-carboxypropyl)histidine synthase complex composed of DPH1, DPH2, DPH3 and a NADH-dependent reductase, predominantly CBR1.</text>
</comment>
<comment type="subcellular location">
    <subcellularLocation>
        <location evidence="2">Mitochondrion outer membrane</location>
        <topology evidence="3">Single-pass membrane protein</topology>
    </subcellularLocation>
</comment>
<comment type="similarity">
    <text evidence="5">Belongs to the flavoprotein pyridine nucleotide cytochrome reductase family.</text>
</comment>
<organism>
    <name type="scientific">Meyerozyma guilliermondii (strain ATCC 6260 / CBS 566 / DSM 6381 / JCM 1539 / NBRC 10279 / NRRL Y-324)</name>
    <name type="common">Yeast</name>
    <name type="synonym">Candida guilliermondii</name>
    <dbReference type="NCBI Taxonomy" id="294746"/>
    <lineage>
        <taxon>Eukaryota</taxon>
        <taxon>Fungi</taxon>
        <taxon>Dikarya</taxon>
        <taxon>Ascomycota</taxon>
        <taxon>Saccharomycotina</taxon>
        <taxon>Pichiomycetes</taxon>
        <taxon>Debaryomycetaceae</taxon>
        <taxon>Meyerozyma</taxon>
    </lineage>
</organism>
<reference key="1">
    <citation type="journal article" date="2009" name="Nature">
        <title>Evolution of pathogenicity and sexual reproduction in eight Candida genomes.</title>
        <authorList>
            <person name="Butler G."/>
            <person name="Rasmussen M.D."/>
            <person name="Lin M.F."/>
            <person name="Santos M.A.S."/>
            <person name="Sakthikumar S."/>
            <person name="Munro C.A."/>
            <person name="Rheinbay E."/>
            <person name="Grabherr M."/>
            <person name="Forche A."/>
            <person name="Reedy J.L."/>
            <person name="Agrafioti I."/>
            <person name="Arnaud M.B."/>
            <person name="Bates S."/>
            <person name="Brown A.J.P."/>
            <person name="Brunke S."/>
            <person name="Costanzo M.C."/>
            <person name="Fitzpatrick D.A."/>
            <person name="de Groot P.W.J."/>
            <person name="Harris D."/>
            <person name="Hoyer L.L."/>
            <person name="Hube B."/>
            <person name="Klis F.M."/>
            <person name="Kodira C."/>
            <person name="Lennard N."/>
            <person name="Logue M.E."/>
            <person name="Martin R."/>
            <person name="Neiman A.M."/>
            <person name="Nikolaou E."/>
            <person name="Quail M.A."/>
            <person name="Quinn J."/>
            <person name="Santos M.C."/>
            <person name="Schmitzberger F.F."/>
            <person name="Sherlock G."/>
            <person name="Shah P."/>
            <person name="Silverstein K.A.T."/>
            <person name="Skrzypek M.S."/>
            <person name="Soll D."/>
            <person name="Staggs R."/>
            <person name="Stansfield I."/>
            <person name="Stumpf M.P.H."/>
            <person name="Sudbery P.E."/>
            <person name="Srikantha T."/>
            <person name="Zeng Q."/>
            <person name="Berman J."/>
            <person name="Berriman M."/>
            <person name="Heitman J."/>
            <person name="Gow N.A.R."/>
            <person name="Lorenz M.C."/>
            <person name="Birren B.W."/>
            <person name="Kellis M."/>
            <person name="Cuomo C.A."/>
        </authorList>
    </citation>
    <scope>NUCLEOTIDE SEQUENCE [LARGE SCALE GENOMIC DNA]</scope>
    <source>
        <strain>ATCC 6260 / CBS 566 / DSM 6381 / JCM 1539 / NBRC 10279 / NRRL Y-324</strain>
    </source>
</reference>
<proteinExistence type="inferred from homology"/>
<dbReference type="EC" id="1.6.2.2" evidence="2"/>
<dbReference type="EMBL" id="CH408161">
    <property type="protein sequence ID" value="EDK41278.1"/>
    <property type="molecule type" value="Genomic_DNA"/>
</dbReference>
<dbReference type="RefSeq" id="XP_001482356.1">
    <property type="nucleotide sequence ID" value="XM_001482306.1"/>
</dbReference>
<dbReference type="SMR" id="A5DQ25"/>
<dbReference type="FunCoup" id="A5DQ25">
    <property type="interactions" value="271"/>
</dbReference>
<dbReference type="STRING" id="294746.A5DQ25"/>
<dbReference type="GeneID" id="5124445"/>
<dbReference type="KEGG" id="pgu:PGUG_05376"/>
<dbReference type="VEuPathDB" id="FungiDB:PGUG_05376"/>
<dbReference type="eggNOG" id="KOG0534">
    <property type="taxonomic scope" value="Eukaryota"/>
</dbReference>
<dbReference type="HOGENOM" id="CLU_003827_9_0_1"/>
<dbReference type="InParanoid" id="A5DQ25"/>
<dbReference type="OMA" id="VQIFMCG"/>
<dbReference type="OrthoDB" id="432685at2759"/>
<dbReference type="UniPathway" id="UPA00559"/>
<dbReference type="Proteomes" id="UP000001997">
    <property type="component" value="Unassembled WGS sequence"/>
</dbReference>
<dbReference type="GO" id="GO:0005783">
    <property type="term" value="C:endoplasmic reticulum"/>
    <property type="evidence" value="ECO:0007669"/>
    <property type="project" value="TreeGrafter"/>
</dbReference>
<dbReference type="GO" id="GO:0005741">
    <property type="term" value="C:mitochondrial outer membrane"/>
    <property type="evidence" value="ECO:0007669"/>
    <property type="project" value="UniProtKB-SubCell"/>
</dbReference>
<dbReference type="GO" id="GO:0005886">
    <property type="term" value="C:plasma membrane"/>
    <property type="evidence" value="ECO:0007669"/>
    <property type="project" value="TreeGrafter"/>
</dbReference>
<dbReference type="GO" id="GO:0090560">
    <property type="term" value="F:2-(3-amino-3-carboxypropyl)histidine synthase activity"/>
    <property type="evidence" value="ECO:0007669"/>
    <property type="project" value="EnsemblFungi"/>
</dbReference>
<dbReference type="GO" id="GO:0004128">
    <property type="term" value="F:cytochrome-b5 reductase activity, acting on NAD(P)H"/>
    <property type="evidence" value="ECO:0000250"/>
    <property type="project" value="UniProtKB"/>
</dbReference>
<dbReference type="GO" id="GO:0003954">
    <property type="term" value="F:NADH dehydrogenase activity"/>
    <property type="evidence" value="ECO:0000250"/>
    <property type="project" value="UniProtKB"/>
</dbReference>
<dbReference type="GO" id="GO:0017183">
    <property type="term" value="P:protein histidyl modification to diphthamide"/>
    <property type="evidence" value="ECO:0000250"/>
    <property type="project" value="UniProtKB"/>
</dbReference>
<dbReference type="GO" id="GO:0002926">
    <property type="term" value="P:tRNA wobble base 5-methoxycarbonylmethyl-2-thiouridinylation"/>
    <property type="evidence" value="ECO:0000250"/>
    <property type="project" value="UniProtKB"/>
</dbReference>
<dbReference type="CDD" id="cd06183">
    <property type="entry name" value="cyt_b5_reduct_like"/>
    <property type="match status" value="1"/>
</dbReference>
<dbReference type="FunFam" id="2.40.30.10:FF:000032">
    <property type="entry name" value="NADH-cytochrome b5 reductase"/>
    <property type="match status" value="1"/>
</dbReference>
<dbReference type="FunFam" id="3.40.50.80:FF:000019">
    <property type="entry name" value="NADH-cytochrome b5 reductase"/>
    <property type="match status" value="1"/>
</dbReference>
<dbReference type="Gene3D" id="3.40.50.80">
    <property type="entry name" value="Nucleotide-binding domain of ferredoxin-NADP reductase (FNR) module"/>
    <property type="match status" value="1"/>
</dbReference>
<dbReference type="Gene3D" id="2.40.30.10">
    <property type="entry name" value="Translation factors"/>
    <property type="match status" value="1"/>
</dbReference>
<dbReference type="InterPro" id="IPR001834">
    <property type="entry name" value="CBR-like"/>
</dbReference>
<dbReference type="InterPro" id="IPR008333">
    <property type="entry name" value="Cbr1-like_FAD-bd_dom"/>
</dbReference>
<dbReference type="InterPro" id="IPR017927">
    <property type="entry name" value="FAD-bd_FR_type"/>
</dbReference>
<dbReference type="InterPro" id="IPR001709">
    <property type="entry name" value="Flavoprot_Pyr_Nucl_cyt_Rdtase"/>
</dbReference>
<dbReference type="InterPro" id="IPR039261">
    <property type="entry name" value="FNR_nucleotide-bd"/>
</dbReference>
<dbReference type="InterPro" id="IPR001433">
    <property type="entry name" value="OxRdtase_FAD/NAD-bd"/>
</dbReference>
<dbReference type="InterPro" id="IPR017938">
    <property type="entry name" value="Riboflavin_synthase-like_b-brl"/>
</dbReference>
<dbReference type="PANTHER" id="PTHR19370">
    <property type="entry name" value="NADH-CYTOCHROME B5 REDUCTASE"/>
    <property type="match status" value="1"/>
</dbReference>
<dbReference type="PANTHER" id="PTHR19370:SF184">
    <property type="entry name" value="NADH-CYTOCHROME B5 REDUCTASE-LIKE"/>
    <property type="match status" value="1"/>
</dbReference>
<dbReference type="Pfam" id="PF00970">
    <property type="entry name" value="FAD_binding_6"/>
    <property type="match status" value="1"/>
</dbReference>
<dbReference type="Pfam" id="PF00175">
    <property type="entry name" value="NAD_binding_1"/>
    <property type="match status" value="1"/>
</dbReference>
<dbReference type="PRINTS" id="PR00406">
    <property type="entry name" value="CYTB5RDTASE"/>
</dbReference>
<dbReference type="PRINTS" id="PR00371">
    <property type="entry name" value="FPNCR"/>
</dbReference>
<dbReference type="SUPFAM" id="SSF52343">
    <property type="entry name" value="Ferredoxin reductase-like, C-terminal NADP-linked domain"/>
    <property type="match status" value="1"/>
</dbReference>
<dbReference type="SUPFAM" id="SSF63380">
    <property type="entry name" value="Riboflavin synthase domain-like"/>
    <property type="match status" value="1"/>
</dbReference>
<dbReference type="PROSITE" id="PS51384">
    <property type="entry name" value="FAD_FR"/>
    <property type="match status" value="1"/>
</dbReference>